<name>RL105_PLAVT</name>
<evidence type="ECO:0000255" key="1"/>
<evidence type="ECO:0000269" key="2">
    <source>
    </source>
</evidence>
<evidence type="ECO:0000303" key="3">
    <source>
    </source>
</evidence>
<evidence type="ECO:0000305" key="4"/>
<evidence type="ECO:0000305" key="5">
    <source>
    </source>
</evidence>
<organism>
    <name type="scientific">Plasmopara viticola</name>
    <name type="common">Downy mildew of grapevine</name>
    <name type="synonym">Botrytis viticola</name>
    <dbReference type="NCBI Taxonomy" id="143451"/>
    <lineage>
        <taxon>Eukaryota</taxon>
        <taxon>Sar</taxon>
        <taxon>Stramenopiles</taxon>
        <taxon>Oomycota</taxon>
        <taxon>Peronosporales</taxon>
        <taxon>Peronosporaceae</taxon>
        <taxon>Plasmopara</taxon>
    </lineage>
</organism>
<sequence>MRGPCSVITALLVVASSQIAAESDYRLQAYHHDVTAVGNAVVKPLPKRYLRGSQHVLDSNEERSVYSVLASMINEGVSKMPQAAEAVEKMPQAAEAVEKMPQAAEAVEKMPQAAEAVEKMPQAAEAVEKMPSAAMAGKKVSRVTKTGKKMPHAAEIEAVEETLHATNARKEPLRADFVEEMPHAAKAKEEMRRAKQHDLLRATEEADEALEKSWHSSEDTAAIGGASRGISSNVILSLKKWKNNFQGMRAMAVSGEHEDIIKPIHEAFVRLCGENMEPTTKEMTLIRNMLDWDVAASPESSHRQNLVSQAQRHVLIGLRIMQRDPEVWNEWNELSESLRFGVLDYLLNLHYQRWVRMYNIFKRHRPDKKDVPMNDKLSLGGNTDKNSALALQTHSKKQNLYPDEPSNVAWTSKKRDGSVLIERSKRTFNGNTDTASVPYKQLKMQSLKPVMPFLTRSTTSGHHSVSIKNPGLSFDGPIFAFVPPNVHKSQSLTPPLVHKDVDTELSLGGIYDRSTHKAPTVP</sequence>
<accession>P0CV42</accession>
<feature type="signal peptide" evidence="1">
    <location>
        <begin position="1"/>
        <end position="21"/>
    </location>
</feature>
<feature type="chain" id="PRO_0000447951" description="Secreted RxLR effector protein 105">
    <location>
        <begin position="22"/>
        <end position="522"/>
    </location>
</feature>
<feature type="short sequence motif" description="RxLR-dEER" evidence="5">
    <location>
        <begin position="48"/>
        <end position="63"/>
    </location>
</feature>
<dbReference type="SMR" id="P0CV42"/>
<dbReference type="GO" id="GO:0005576">
    <property type="term" value="C:extracellular region"/>
    <property type="evidence" value="ECO:0007669"/>
    <property type="project" value="UniProtKB-SubCell"/>
</dbReference>
<dbReference type="GO" id="GO:0030430">
    <property type="term" value="C:host cell cytoplasm"/>
    <property type="evidence" value="ECO:0007669"/>
    <property type="project" value="UniProtKB-SubCell"/>
</dbReference>
<dbReference type="GO" id="GO:0042025">
    <property type="term" value="C:host cell nucleus"/>
    <property type="evidence" value="ECO:0007669"/>
    <property type="project" value="UniProtKB-SubCell"/>
</dbReference>
<comment type="function">
    <text evidence="2">Secreted effector that dos not suppress the host cell death induced by cell death-inducing proteins.</text>
</comment>
<comment type="subcellular location">
    <subcellularLocation>
        <location evidence="2">Secreted</location>
    </subcellularLocation>
    <subcellularLocation>
        <location evidence="2">Host nucleus</location>
    </subcellularLocation>
    <subcellularLocation>
        <location evidence="2">Host cytoplasm</location>
    </subcellularLocation>
</comment>
<comment type="domain">
    <text evidence="5">The RxLR-dEER motif acts to carry the protein into the host cell cytoplasm through binding to cell surface phosphatidylinositol-3-phosphate.</text>
</comment>
<comment type="similarity">
    <text evidence="4">Belongs to the RxLR effector family.</text>
</comment>
<proteinExistence type="evidence at transcript level"/>
<gene>
    <name evidence="3" type="primary">RXLR105</name>
</gene>
<keyword id="KW-1035">Host cytoplasm</keyword>
<keyword id="KW-1048">Host nucleus</keyword>
<keyword id="KW-0964">Secreted</keyword>
<keyword id="KW-0732">Signal</keyword>
<keyword id="KW-0843">Virulence</keyword>
<reference key="1">
    <citation type="journal article" date="2018" name="Front. Plant Sci.">
        <title>In planta functional analysis and subcellular localization of the oomycete pathogen Plasmopara viticola candidate RXLR effector repertoire.</title>
        <authorList>
            <person name="Liu Y."/>
            <person name="Lan X."/>
            <person name="Song S."/>
            <person name="Yin L."/>
            <person name="Dry I.B."/>
            <person name="Qu J."/>
            <person name="Xiang J."/>
            <person name="Lu J."/>
        </authorList>
    </citation>
    <scope>NUCLEOTIDE SEQUENCE [MRNA]</scope>
    <scope>DOMAIN</scope>
    <scope>FUNCTION</scope>
    <scope>SUBCELLULAR LOCATION</scope>
</reference>
<protein>
    <recommendedName>
        <fullName evidence="3">Secreted RxLR effector protein 105</fullName>
    </recommendedName>
</protein>